<dbReference type="EMBL" id="CP001463">
    <property type="protein sequence ID" value="ACS89356.1"/>
    <property type="molecule type" value="Genomic_DNA"/>
</dbReference>
<dbReference type="RefSeq" id="WP_015848576.1">
    <property type="nucleotide sequence ID" value="NC_012883.1"/>
</dbReference>
<dbReference type="SMR" id="C6A161"/>
<dbReference type="STRING" id="604354.TSIB_0290"/>
<dbReference type="GeneID" id="8095263"/>
<dbReference type="KEGG" id="tsi:TSIB_0290"/>
<dbReference type="eggNOG" id="arCOG04072">
    <property type="taxonomic scope" value="Archaea"/>
</dbReference>
<dbReference type="HOGENOM" id="CLU_037562_4_2_2"/>
<dbReference type="OrthoDB" id="7751at2157"/>
<dbReference type="Proteomes" id="UP000009079">
    <property type="component" value="Chromosome"/>
</dbReference>
<dbReference type="GO" id="GO:1990904">
    <property type="term" value="C:ribonucleoprotein complex"/>
    <property type="evidence" value="ECO:0007669"/>
    <property type="project" value="UniProtKB-KW"/>
</dbReference>
<dbReference type="GO" id="GO:0005840">
    <property type="term" value="C:ribosome"/>
    <property type="evidence" value="ECO:0007669"/>
    <property type="project" value="UniProtKB-KW"/>
</dbReference>
<dbReference type="GO" id="GO:0019843">
    <property type="term" value="F:rRNA binding"/>
    <property type="evidence" value="ECO:0007669"/>
    <property type="project" value="UniProtKB-UniRule"/>
</dbReference>
<dbReference type="GO" id="GO:0003735">
    <property type="term" value="F:structural constituent of ribosome"/>
    <property type="evidence" value="ECO:0007669"/>
    <property type="project" value="InterPro"/>
</dbReference>
<dbReference type="GO" id="GO:0006412">
    <property type="term" value="P:translation"/>
    <property type="evidence" value="ECO:0007669"/>
    <property type="project" value="UniProtKB-UniRule"/>
</dbReference>
<dbReference type="FunFam" id="3.30.70.330:FF:001084">
    <property type="entry name" value="50S ribosomal protein L23"/>
    <property type="match status" value="1"/>
</dbReference>
<dbReference type="Gene3D" id="3.30.70.330">
    <property type="match status" value="1"/>
</dbReference>
<dbReference type="HAMAP" id="MF_01369_A">
    <property type="entry name" value="Ribosomal_uL23_A"/>
    <property type="match status" value="1"/>
</dbReference>
<dbReference type="HAMAP" id="MF_01369_B">
    <property type="entry name" value="Ribosomal_uL23_B"/>
    <property type="match status" value="1"/>
</dbReference>
<dbReference type="InterPro" id="IPR012677">
    <property type="entry name" value="Nucleotide-bd_a/b_plait_sf"/>
</dbReference>
<dbReference type="InterPro" id="IPR019985">
    <property type="entry name" value="Ribosomal_uL23"/>
</dbReference>
<dbReference type="InterPro" id="IPR013025">
    <property type="entry name" value="Ribosomal_uL23-like"/>
</dbReference>
<dbReference type="InterPro" id="IPR012678">
    <property type="entry name" value="Ribosomal_uL23/eL15/eS24_sf"/>
</dbReference>
<dbReference type="InterPro" id="IPR001014">
    <property type="entry name" value="Ribosomal_uL23_CS"/>
</dbReference>
<dbReference type="NCBIfam" id="NF011118">
    <property type="entry name" value="PRK14548.1"/>
    <property type="match status" value="1"/>
</dbReference>
<dbReference type="NCBIfam" id="TIGR03636">
    <property type="entry name" value="uL23_arch"/>
    <property type="match status" value="1"/>
</dbReference>
<dbReference type="PANTHER" id="PTHR11620">
    <property type="entry name" value="60S RIBOSOMAL PROTEIN L23A"/>
    <property type="match status" value="1"/>
</dbReference>
<dbReference type="Pfam" id="PF00276">
    <property type="entry name" value="Ribosomal_L23"/>
    <property type="match status" value="1"/>
</dbReference>
<dbReference type="SUPFAM" id="SSF54189">
    <property type="entry name" value="Ribosomal proteins S24e, L23 and L15e"/>
    <property type="match status" value="1"/>
</dbReference>
<dbReference type="PROSITE" id="PS00050">
    <property type="entry name" value="RIBOSOMAL_L23"/>
    <property type="match status" value="1"/>
</dbReference>
<gene>
    <name evidence="1" type="primary">rpl23</name>
    <name type="ordered locus">TSIB_0290</name>
</gene>
<reference key="1">
    <citation type="journal article" date="2009" name="Appl. Environ. Microbiol.">
        <title>Metabolic versatility and indigenous origin of the archaeon Thermococcus sibiricus, isolated from a siberian oil reservoir, as revealed by genome analysis.</title>
        <authorList>
            <person name="Mardanov A.V."/>
            <person name="Ravin N.V."/>
            <person name="Svetlitchnyi V.A."/>
            <person name="Beletsky A.V."/>
            <person name="Miroshnichenko M.L."/>
            <person name="Bonch-Osmolovskaya E.A."/>
            <person name="Skryabin K.G."/>
        </authorList>
    </citation>
    <scope>NUCLEOTIDE SEQUENCE [LARGE SCALE GENOMIC DNA]</scope>
    <source>
        <strain>DSM 12597 / MM 739</strain>
    </source>
</reference>
<comment type="function">
    <text evidence="1">Binds to 23S rRNA. One of the proteins that surrounds the polypeptide exit tunnel on the outside of the ribosome.</text>
</comment>
<comment type="subunit">
    <text evidence="1">Part of the 50S ribosomal subunit. Contacts protein L29.</text>
</comment>
<comment type="similarity">
    <text evidence="1">Belongs to the universal ribosomal protein uL23 family.</text>
</comment>
<protein>
    <recommendedName>
        <fullName evidence="1">Large ribosomal subunit protein uL23</fullName>
    </recommendedName>
    <alternativeName>
        <fullName evidence="2">50S ribosomal protein L23</fullName>
    </alternativeName>
</protein>
<name>RL23_THESM</name>
<accession>C6A161</accession>
<keyword id="KW-1185">Reference proteome</keyword>
<keyword id="KW-0687">Ribonucleoprotein</keyword>
<keyword id="KW-0689">Ribosomal protein</keyword>
<keyword id="KW-0694">RNA-binding</keyword>
<keyword id="KW-0699">rRNA-binding</keyword>
<proteinExistence type="inferred from homology"/>
<organism>
    <name type="scientific">Thermococcus sibiricus (strain DSM 12597 / MM 739)</name>
    <dbReference type="NCBI Taxonomy" id="604354"/>
    <lineage>
        <taxon>Archaea</taxon>
        <taxon>Methanobacteriati</taxon>
        <taxon>Methanobacteriota</taxon>
        <taxon>Thermococci</taxon>
        <taxon>Thermococcales</taxon>
        <taxon>Thermococcaceae</taxon>
        <taxon>Thermococcus</taxon>
    </lineage>
</organism>
<sequence length="86" mass="9786">MDPYKVIVRPVVTEKAISMVERENKLTFIVDKRATKPDIKKAVETVYEVKVDKVNIVITMKGEKKAYVKLKPEYSASEVAARIGLF</sequence>
<feature type="chain" id="PRO_1000215048" description="Large ribosomal subunit protein uL23">
    <location>
        <begin position="1"/>
        <end position="86"/>
    </location>
</feature>
<evidence type="ECO:0000255" key="1">
    <source>
        <dbReference type="HAMAP-Rule" id="MF_01369"/>
    </source>
</evidence>
<evidence type="ECO:0000305" key="2"/>